<accession>B0Z5C9</accession>
<dbReference type="EC" id="2.7.7.6" evidence="1"/>
<dbReference type="EMBL" id="EU262891">
    <property type="protein sequence ID" value="ABX10122.1"/>
    <property type="molecule type" value="Genomic_DNA"/>
</dbReference>
<dbReference type="RefSeq" id="YP_001687452.1">
    <property type="nucleotide sequence ID" value="NC_010362.1"/>
</dbReference>
<dbReference type="SMR" id="B0Z5C9"/>
<dbReference type="GeneID" id="5955436"/>
<dbReference type="GO" id="GO:0009507">
    <property type="term" value="C:chloroplast"/>
    <property type="evidence" value="ECO:0007669"/>
    <property type="project" value="UniProtKB-SubCell"/>
</dbReference>
<dbReference type="GO" id="GO:0000428">
    <property type="term" value="C:DNA-directed RNA polymerase complex"/>
    <property type="evidence" value="ECO:0007669"/>
    <property type="project" value="UniProtKB-KW"/>
</dbReference>
<dbReference type="GO" id="GO:0005739">
    <property type="term" value="C:mitochondrion"/>
    <property type="evidence" value="ECO:0007669"/>
    <property type="project" value="GOC"/>
</dbReference>
<dbReference type="GO" id="GO:0003677">
    <property type="term" value="F:DNA binding"/>
    <property type="evidence" value="ECO:0007669"/>
    <property type="project" value="UniProtKB-UniRule"/>
</dbReference>
<dbReference type="GO" id="GO:0003899">
    <property type="term" value="F:DNA-directed RNA polymerase activity"/>
    <property type="evidence" value="ECO:0007669"/>
    <property type="project" value="UniProtKB-UniRule"/>
</dbReference>
<dbReference type="GO" id="GO:0008270">
    <property type="term" value="F:zinc ion binding"/>
    <property type="evidence" value="ECO:0007669"/>
    <property type="project" value="UniProtKB-UniRule"/>
</dbReference>
<dbReference type="GO" id="GO:0006351">
    <property type="term" value="P:DNA-templated transcription"/>
    <property type="evidence" value="ECO:0007669"/>
    <property type="project" value="UniProtKB-UniRule"/>
</dbReference>
<dbReference type="CDD" id="cd02655">
    <property type="entry name" value="RNAP_beta'_C"/>
    <property type="match status" value="1"/>
</dbReference>
<dbReference type="FunFam" id="1.10.132.30:FF:000002">
    <property type="entry name" value="DNA-directed RNA polymerase subunit beta"/>
    <property type="match status" value="1"/>
</dbReference>
<dbReference type="Gene3D" id="1.10.132.30">
    <property type="match status" value="1"/>
</dbReference>
<dbReference type="Gene3D" id="1.10.150.390">
    <property type="match status" value="1"/>
</dbReference>
<dbReference type="Gene3D" id="1.10.1790.20">
    <property type="match status" value="1"/>
</dbReference>
<dbReference type="Gene3D" id="1.10.274.100">
    <property type="entry name" value="RNA polymerase Rpb1, domain 3"/>
    <property type="match status" value="1"/>
</dbReference>
<dbReference type="HAMAP" id="MF_01324">
    <property type="entry name" value="RNApol_bact_RpoC2"/>
    <property type="match status" value="1"/>
</dbReference>
<dbReference type="InterPro" id="IPR012756">
    <property type="entry name" value="DNA-dir_RpoC2_beta_pp"/>
</dbReference>
<dbReference type="InterPro" id="IPR050254">
    <property type="entry name" value="RNA_pol_beta''_euk"/>
</dbReference>
<dbReference type="InterPro" id="IPR042102">
    <property type="entry name" value="RNA_pol_Rpb1_3_sf"/>
</dbReference>
<dbReference type="InterPro" id="IPR007083">
    <property type="entry name" value="RNA_pol_Rpb1_4"/>
</dbReference>
<dbReference type="InterPro" id="IPR007081">
    <property type="entry name" value="RNA_pol_Rpb1_5"/>
</dbReference>
<dbReference type="InterPro" id="IPR038120">
    <property type="entry name" value="Rpb1_funnel_sf"/>
</dbReference>
<dbReference type="NCBIfam" id="TIGR02388">
    <property type="entry name" value="rpoC2_cyan"/>
    <property type="match status" value="1"/>
</dbReference>
<dbReference type="PANTHER" id="PTHR34995">
    <property type="entry name" value="DNA-DIRECTED RNA POLYMERASE SUBUNIT BETA"/>
    <property type="match status" value="1"/>
</dbReference>
<dbReference type="PANTHER" id="PTHR34995:SF1">
    <property type="entry name" value="DNA-DIRECTED RNA POLYMERASE SUBUNIT BETA"/>
    <property type="match status" value="1"/>
</dbReference>
<dbReference type="Pfam" id="PF05000">
    <property type="entry name" value="RNA_pol_Rpb1_4"/>
    <property type="match status" value="1"/>
</dbReference>
<dbReference type="Pfam" id="PF04998">
    <property type="entry name" value="RNA_pol_Rpb1_5"/>
    <property type="match status" value="2"/>
</dbReference>
<dbReference type="SUPFAM" id="SSF64484">
    <property type="entry name" value="beta and beta-prime subunits of DNA dependent RNA-polymerase"/>
    <property type="match status" value="1"/>
</dbReference>
<evidence type="ECO:0000255" key="1">
    <source>
        <dbReference type="HAMAP-Rule" id="MF_01324"/>
    </source>
</evidence>
<feature type="chain" id="PRO_0000353577" description="DNA-directed RNA polymerase subunit beta''">
    <location>
        <begin position="1"/>
        <end position="1383"/>
    </location>
</feature>
<feature type="binding site" evidence="1">
    <location>
        <position position="220"/>
    </location>
    <ligand>
        <name>Zn(2+)</name>
        <dbReference type="ChEBI" id="CHEBI:29105"/>
    </ligand>
</feature>
<feature type="binding site" evidence="1">
    <location>
        <position position="289"/>
    </location>
    <ligand>
        <name>Zn(2+)</name>
        <dbReference type="ChEBI" id="CHEBI:29105"/>
    </ligand>
</feature>
<feature type="binding site" evidence="1">
    <location>
        <position position="296"/>
    </location>
    <ligand>
        <name>Zn(2+)</name>
        <dbReference type="ChEBI" id="CHEBI:29105"/>
    </ligand>
</feature>
<feature type="binding site" evidence="1">
    <location>
        <position position="299"/>
    </location>
    <ligand>
        <name>Zn(2+)</name>
        <dbReference type="ChEBI" id="CHEBI:29105"/>
    </ligand>
</feature>
<sequence>MDEGVNLVFHKKVIDGTAIKRLISRLIDHFGMAHTSHILDQVKTLGFQQATATSISLGIDDLLTIPSKGWLVQDAEQQSLSLEKHHHYGNVHAVEKLRQSIEVWYATSEYLRQEMNPNFRMTDPFNPVHIMSFSGARGNASQVHQLVGMRGLMSDPQGQMIDLPIQSNLREGLSLTEYIISCYGARKGVVDTAVRTSDAGYLTRRLVEVVQHIVVRRTDCGTLRGISVSPRRMPERIFIQTLIGRVLADDIYIGSRCIAIRNQDIGIGLVNRFITFRIQPISIRTPFTCRSTSWICRLCYGRSPTHGDLVELGEAVGIIAGQSIGEPGTQLTLRTFHTGGVFTGGTAEHVRAPSNGKIKFNFNEALVHPARTRHGHPALLCSMDLDVTIESEDILHNLTIPPKSFLLVQNNQYVESEQVIAEICAGTSTFHFKERVRKHIYSDSEGEMHWSTDVYHAPEFTYSNVHLLPKTSHLWILSGGSCRSRGAPFSLHKDQDQMNPRSTERERRYLSSLSANNDQIRYKFFSSSFSGKKKDDRSPGYSEMNRIICTLPCNLIYPSILRENSDLLAKRRRNRLVIPVQSSQEREKELIPHSGISIELPINGIFRKKSILAFFDDPRYRTKSSGITQYETMGMHSIVKKEGLVDYRGINEFKPKYQMTIDRFFFIPEEVHILPESSSIMVRNNSLIGVDTRIALNTRSRAGGLVRVERKKRGIALQIFSGTIHFPGETDKISWDSGILIPPGTGKRNSKESKKWKNGIYVQRITPTKKKHFVLFRPVVTYEIADGLNLARLFPPDLCQEKDNMQLQIVNYIVYGNGKPIREISDTSIQLVRTWFILNWDQDKKSASAEAAHASFVEVRAKGLIRDFLRIDLVKSPILDPRKRNDPSGSGLISDNVSDHTNINPFYSKPKMKQSPRQNHGTIRTLLNQNKECPSLMILSASNCFRMGPFNDVKSQNVIKESIKKDAIIQIRNSIGPLGTALQVVNFDSFYYFITHNQVLLTKYLQVENLKQTFQVLQYYLMDESGRIYNPDPRSNIVLNSFNLSWYFLPHNNYENSCEEISTIVSLGQFICENGCIAKNGPYLRSGQVLIVQLDSVVIRSAKPYLATPGATVHGHYGEILYDGDTVVTFLYEKSRSGDITQGLPKVEQVLEVRSVDSISVNLEKRVENWNEHITRILGFPWGFLIGAELTIVQSRISLVNKIQKVYRSQGVQIHNRHIEIIVRQITSKVLVSEDGMSNVFLPRELIGLLRAERTGRALEESICYKAFLLGITRTSLNTQSFISEASFQETARVLAKAALRGRIDWLKGLKENVVIGGMIPVGTGFKGLVHCSKQHKSIPKNKHFFEGEIRDILFHHRELFDSCISKNFHDTPEQSFRVFNDS</sequence>
<geneLocation type="chloroplast"/>
<name>RPOC2_OENPA</name>
<protein>
    <recommendedName>
        <fullName evidence="1">DNA-directed RNA polymerase subunit beta''</fullName>
        <ecNumber evidence="1">2.7.7.6</ecNumber>
    </recommendedName>
    <alternativeName>
        <fullName evidence="1">PEP</fullName>
    </alternativeName>
    <alternativeName>
        <fullName evidence="1">Plastid-encoded RNA polymerase subunit beta''</fullName>
        <shortName evidence="1">RNA polymerase subunit beta''</shortName>
    </alternativeName>
</protein>
<comment type="function">
    <text evidence="1">DNA-dependent RNA polymerase catalyzes the transcription of DNA into RNA using the four ribonucleoside triphosphates as substrates.</text>
</comment>
<comment type="catalytic activity">
    <reaction evidence="1">
        <text>RNA(n) + a ribonucleoside 5'-triphosphate = RNA(n+1) + diphosphate</text>
        <dbReference type="Rhea" id="RHEA:21248"/>
        <dbReference type="Rhea" id="RHEA-COMP:14527"/>
        <dbReference type="Rhea" id="RHEA-COMP:17342"/>
        <dbReference type="ChEBI" id="CHEBI:33019"/>
        <dbReference type="ChEBI" id="CHEBI:61557"/>
        <dbReference type="ChEBI" id="CHEBI:140395"/>
        <dbReference type="EC" id="2.7.7.6"/>
    </reaction>
</comment>
<comment type="cofactor">
    <cofactor evidence="1">
        <name>Zn(2+)</name>
        <dbReference type="ChEBI" id="CHEBI:29105"/>
    </cofactor>
    <text evidence="1">Binds 1 Zn(2+) ion per subunit.</text>
</comment>
<comment type="subunit">
    <text evidence="1">In plastids the minimal PEP RNA polymerase catalytic core is composed of four subunits: alpha, beta, beta', and beta''. When a (nuclear-encoded) sigma factor is associated with the core the holoenzyme is formed, which can initiate transcription.</text>
</comment>
<comment type="subcellular location">
    <subcellularLocation>
        <location evidence="1">Plastid</location>
        <location evidence="1">Chloroplast</location>
    </subcellularLocation>
</comment>
<comment type="similarity">
    <text evidence="1">Belongs to the RNA polymerase beta' chain family. RpoC2 subfamily.</text>
</comment>
<gene>
    <name evidence="1" type="primary">rpoC2</name>
</gene>
<proteinExistence type="inferred from homology"/>
<organism>
    <name type="scientific">Oenothera parviflora</name>
    <name type="common">Small-flowered evening primrose</name>
    <name type="synonym">Oenothera cruciata</name>
    <dbReference type="NCBI Taxonomy" id="482429"/>
    <lineage>
        <taxon>Eukaryota</taxon>
        <taxon>Viridiplantae</taxon>
        <taxon>Streptophyta</taxon>
        <taxon>Embryophyta</taxon>
        <taxon>Tracheophyta</taxon>
        <taxon>Spermatophyta</taxon>
        <taxon>Magnoliopsida</taxon>
        <taxon>eudicotyledons</taxon>
        <taxon>Gunneridae</taxon>
        <taxon>Pentapetalae</taxon>
        <taxon>rosids</taxon>
        <taxon>malvids</taxon>
        <taxon>Myrtales</taxon>
        <taxon>Onagraceae</taxon>
        <taxon>Onagroideae</taxon>
        <taxon>Onagreae</taxon>
        <taxon>Oenothera</taxon>
    </lineage>
</organism>
<keyword id="KW-0150">Chloroplast</keyword>
<keyword id="KW-0240">DNA-directed RNA polymerase</keyword>
<keyword id="KW-0479">Metal-binding</keyword>
<keyword id="KW-0548">Nucleotidyltransferase</keyword>
<keyword id="KW-0934">Plastid</keyword>
<keyword id="KW-0804">Transcription</keyword>
<keyword id="KW-0808">Transferase</keyword>
<keyword id="KW-0862">Zinc</keyword>
<reference key="1">
    <citation type="journal article" date="2008" name="Nucleic Acids Res.">
        <title>The complete nucleotide sequences of the five genetically distinct plastid genomes of Oenothera, subsection Oenothera: I. Sequence evaluation and plastome evolution.</title>
        <authorList>
            <person name="Greiner S."/>
            <person name="Wang X."/>
            <person name="Rauwolf U."/>
            <person name="Silber M.V."/>
            <person name="Mayer K."/>
            <person name="Meurer J."/>
            <person name="Haberer G."/>
            <person name="Herrmann R.G."/>
        </authorList>
    </citation>
    <scope>NUCLEOTIDE SEQUENCE [LARGE SCALE GENOMIC DNA]</scope>
    <source>
        <strain>cv. Atrovirens</strain>
    </source>
</reference>